<keyword id="KW-0204">Cytolysis</keyword>
<keyword id="KW-1061">Dermonecrotic toxin</keyword>
<keyword id="KW-0903">Direct protein sequencing</keyword>
<keyword id="KW-1015">Disulfide bond</keyword>
<keyword id="KW-0354">Hemolysis</keyword>
<keyword id="KW-0442">Lipid degradation</keyword>
<keyword id="KW-0443">Lipid metabolism</keyword>
<keyword id="KW-0456">Lyase</keyword>
<keyword id="KW-0460">Magnesium</keyword>
<keyword id="KW-0479">Metal-binding</keyword>
<keyword id="KW-0964">Secreted</keyword>
<keyword id="KW-0800">Toxin</keyword>
<reference key="1">
    <citation type="journal article" date="1996" name="J. Protein Chem.">
        <title>Compared chemical properties of dermonecrotic and lethal toxins from spiders of the genus Loxosceles (Araneae).</title>
        <authorList>
            <person name="Barbaro K.C."/>
            <person name="Sousa M.V."/>
            <person name="Morhy L."/>
            <person name="Eickstedt V.R."/>
            <person name="Mota I."/>
        </authorList>
    </citation>
    <scope>PROTEIN SEQUENCE</scope>
    <scope>SUBCELLULAR LOCATION</scope>
    <scope>FUNCTION</scope>
    <source>
        <tissue>Venom</tissue>
    </source>
</reference>
<comment type="function">
    <text evidence="1 3 6">Dermonecrotic toxins cleave the phosphodiester linkage between the phosphate and headgroup of certain phospholipids (sphingolipid and lysolipid substrates), forming an alcohol (often choline) and a cyclic phosphate (By similarity). This toxin acts on sphingomyelin (SM) (By similarity). It may also act on ceramide phosphoethanolamine (CPE), lysophosphatidylcholine (LPC) and lysophosphatidylethanolamine (LPE), but not on lysophosphatidylserine (LPS), and lysophosphatidylglycerol (LPG) (By similarity). It acts by transphosphatidylation, releasing exclusively cyclic phosphate products as second products (By similarity). In vivo, intradermal injection induces dermonecrosis (PubMed:8819009). Induces hemolysis, increased vascular permeability, edema, inflammatory response, and platelet aggregation (By similarity).</text>
</comment>
<comment type="catalytic activity">
    <reaction evidence="1">
        <text>an N-(acyl)-sphingosylphosphocholine = an N-(acyl)-sphingosyl-1,3-cyclic phosphate + choline</text>
        <dbReference type="Rhea" id="RHEA:60652"/>
        <dbReference type="ChEBI" id="CHEBI:15354"/>
        <dbReference type="ChEBI" id="CHEBI:64583"/>
        <dbReference type="ChEBI" id="CHEBI:143892"/>
    </reaction>
</comment>
<comment type="catalytic activity">
    <reaction evidence="1">
        <text>an N-(acyl)-sphingosylphosphoethanolamine = an N-(acyl)-sphingosyl-1,3-cyclic phosphate + ethanolamine</text>
        <dbReference type="Rhea" id="RHEA:60648"/>
        <dbReference type="ChEBI" id="CHEBI:57603"/>
        <dbReference type="ChEBI" id="CHEBI:143891"/>
        <dbReference type="ChEBI" id="CHEBI:143892"/>
    </reaction>
</comment>
<comment type="catalytic activity">
    <reaction evidence="1">
        <text>a 1-acyl-sn-glycero-3-phosphocholine = a 1-acyl-sn-glycero-2,3-cyclic phosphate + choline</text>
        <dbReference type="Rhea" id="RHEA:60700"/>
        <dbReference type="ChEBI" id="CHEBI:15354"/>
        <dbReference type="ChEBI" id="CHEBI:58168"/>
        <dbReference type="ChEBI" id="CHEBI:143947"/>
    </reaction>
</comment>
<comment type="catalytic activity">
    <reaction evidence="1">
        <text>a 1-acyl-sn-glycero-3-phosphoethanolamine = a 1-acyl-sn-glycero-2,3-cyclic phosphate + ethanolamine</text>
        <dbReference type="Rhea" id="RHEA:60704"/>
        <dbReference type="ChEBI" id="CHEBI:57603"/>
        <dbReference type="ChEBI" id="CHEBI:64381"/>
        <dbReference type="ChEBI" id="CHEBI:143947"/>
    </reaction>
</comment>
<comment type="cofactor">
    <cofactor evidence="5">
        <name>Mg(2+)</name>
        <dbReference type="ChEBI" id="CHEBI:18420"/>
    </cofactor>
    <text evidence="5">Binds 1 Mg(2+) ion per subunit.</text>
</comment>
<comment type="subcellular location">
    <subcellularLocation>
        <location evidence="6">Secreted</location>
    </subcellularLocation>
</comment>
<comment type="tissue specificity">
    <text evidence="8">Expressed by the venom gland.</text>
</comment>
<comment type="PTM">
    <text evidence="3">Contains 2 disulfide bonds.</text>
</comment>
<comment type="similarity">
    <text evidence="7">Belongs to the arthropod phospholipase D family. Class II subfamily.</text>
</comment>
<comment type="caution">
    <text evidence="1 2 4">The most common activity assay for dermonecrotic toxins detects enzymatic activity by monitoring choline release from substrate. Liberation of choline from sphingomyelin (SM) or lysophosphatidylcholine (LPC) is commonly assumed to result from substrate hydrolysis, giving either ceramide-1-phosphate (C1P) or lysophosphatidic acid (LPA), respectively, as a second product. However, two studies from Lajoie and colleagues (2013 and 2015) report the observation of exclusive formation of cyclic phosphate products as second products, resulting from intramolecular transphosphatidylation. Cyclic phosphates have vastly different biological properties from their monoester counterparts, and they may be relevant to the pathology of brown spider envenomation.</text>
</comment>
<organism>
    <name type="scientific">Loxosceles intermedia</name>
    <name type="common">Brown spider</name>
    <dbReference type="NCBI Taxonomy" id="58218"/>
    <lineage>
        <taxon>Eukaryota</taxon>
        <taxon>Metazoa</taxon>
        <taxon>Ecdysozoa</taxon>
        <taxon>Arthropoda</taxon>
        <taxon>Chelicerata</taxon>
        <taxon>Arachnida</taxon>
        <taxon>Araneae</taxon>
        <taxon>Araneomorphae</taxon>
        <taxon>Haplogynae</taxon>
        <taxon>Scytodoidea</taxon>
        <taxon>Sicariidae</taxon>
        <taxon>Loxosceles</taxon>
    </lineage>
</organism>
<accession>P0C2L0</accession>
<evidence type="ECO:0000250" key="1">
    <source>
        <dbReference type="UniProtKB" id="A0A0D4WTV1"/>
    </source>
</evidence>
<evidence type="ECO:0000250" key="2">
    <source>
        <dbReference type="UniProtKB" id="A0A0D4WV12"/>
    </source>
</evidence>
<evidence type="ECO:0000250" key="3">
    <source>
        <dbReference type="UniProtKB" id="P0CE80"/>
    </source>
</evidence>
<evidence type="ECO:0000250" key="4">
    <source>
        <dbReference type="UniProtKB" id="Q4ZFU2"/>
    </source>
</evidence>
<evidence type="ECO:0000250" key="5">
    <source>
        <dbReference type="UniProtKB" id="Q8I914"/>
    </source>
</evidence>
<evidence type="ECO:0000269" key="6">
    <source>
    </source>
</evidence>
<evidence type="ECO:0000305" key="7"/>
<evidence type="ECO:0000305" key="8">
    <source>
    </source>
</evidence>
<sequence>AGNKRPIWIMGAMVNAIKDIXDFVNLGANNIEK</sequence>
<name>A1X1_LOXIN</name>
<proteinExistence type="evidence at protein level"/>
<feature type="chain" id="PRO_0000279573" description="Dermonecrotic toxin LiSicTox-alphaI-1">
    <location>
        <begin position="1"/>
        <end position="33" status="greater than"/>
    </location>
</feature>
<feature type="binding site" evidence="5">
    <location>
        <position position="32"/>
    </location>
    <ligand>
        <name>Mg(2+)</name>
        <dbReference type="ChEBI" id="CHEBI:18420"/>
    </ligand>
</feature>
<feature type="unsure residue" description="Assigned by comparison with orthologs">
    <location>
        <position position="32"/>
    </location>
</feature>
<feature type="non-terminal residue">
    <location>
        <position position="33"/>
    </location>
</feature>
<dbReference type="EC" id="4.6.1.-" evidence="4"/>
<dbReference type="ArachnoServer" id="AS000140">
    <property type="toxin name" value="Sphingomyelinase D (LiSicTox1) (N-terminal fragment)"/>
</dbReference>
<dbReference type="GO" id="GO:0005576">
    <property type="term" value="C:extracellular region"/>
    <property type="evidence" value="ECO:0007669"/>
    <property type="project" value="UniProtKB-SubCell"/>
</dbReference>
<dbReference type="GO" id="GO:0016829">
    <property type="term" value="F:lyase activity"/>
    <property type="evidence" value="ECO:0007669"/>
    <property type="project" value="UniProtKB-KW"/>
</dbReference>
<dbReference type="GO" id="GO:0046872">
    <property type="term" value="F:metal ion binding"/>
    <property type="evidence" value="ECO:0007669"/>
    <property type="project" value="UniProtKB-KW"/>
</dbReference>
<dbReference type="GO" id="GO:0008081">
    <property type="term" value="F:phosphoric diester hydrolase activity"/>
    <property type="evidence" value="ECO:0007669"/>
    <property type="project" value="InterPro"/>
</dbReference>
<dbReference type="GO" id="GO:0090729">
    <property type="term" value="F:toxin activity"/>
    <property type="evidence" value="ECO:0007669"/>
    <property type="project" value="UniProtKB-KW"/>
</dbReference>
<dbReference type="GO" id="GO:0031640">
    <property type="term" value="P:killing of cells of another organism"/>
    <property type="evidence" value="ECO:0007669"/>
    <property type="project" value="UniProtKB-KW"/>
</dbReference>
<dbReference type="GO" id="GO:0016042">
    <property type="term" value="P:lipid catabolic process"/>
    <property type="evidence" value="ECO:0007669"/>
    <property type="project" value="UniProtKB-KW"/>
</dbReference>
<dbReference type="Gene3D" id="3.20.20.190">
    <property type="entry name" value="Phosphatidylinositol (PI) phosphodiesterase"/>
    <property type="match status" value="1"/>
</dbReference>
<dbReference type="InterPro" id="IPR017946">
    <property type="entry name" value="PLC-like_Pdiesterase_TIM-brl"/>
</dbReference>
<protein>
    <recommendedName>
        <fullName>Dermonecrotic toxin LiSicTox-alphaI-1</fullName>
        <ecNumber evidence="4">4.6.1.-</ecNumber>
    </recommendedName>
    <alternativeName>
        <fullName>Phospholipase D</fullName>
        <shortName>PLD</shortName>
    </alternativeName>
    <alternativeName>
        <fullName>Sphingomyelin phosphodiesterase D</fullName>
        <shortName>SMD</shortName>
        <shortName>SMase D</shortName>
        <shortName>Sphingomyelinase D</shortName>
    </alternativeName>
</protein>